<evidence type="ECO:0000250" key="1">
    <source>
        <dbReference type="UniProtKB" id="Q2FYQ5"/>
    </source>
</evidence>
<evidence type="ECO:0000255" key="2">
    <source>
        <dbReference type="PROSITE-ProRule" id="PRU00441"/>
    </source>
</evidence>
<evidence type="ECO:0000305" key="3"/>
<proteinExistence type="inferred from homology"/>
<keyword id="KW-1003">Cell membrane</keyword>
<keyword id="KW-0406">Ion transport</keyword>
<keyword id="KW-0472">Membrane</keyword>
<keyword id="KW-0533">Nickel</keyword>
<keyword id="KW-0921">Nickel transport</keyword>
<keyword id="KW-0812">Transmembrane</keyword>
<keyword id="KW-1133">Transmembrane helix</keyword>
<keyword id="KW-0813">Transport</keyword>
<name>NIKB_STAAB</name>
<feature type="chain" id="PRO_0000276774" description="Nickel import system permease protein NikB">
    <location>
        <begin position="1"/>
        <end position="328"/>
    </location>
</feature>
<feature type="transmembrane region" description="Helical" evidence="2">
    <location>
        <begin position="11"/>
        <end position="31"/>
    </location>
</feature>
<feature type="transmembrane region" description="Helical" evidence="2">
    <location>
        <begin position="104"/>
        <end position="124"/>
    </location>
</feature>
<feature type="transmembrane region" description="Helical" evidence="2">
    <location>
        <begin position="139"/>
        <end position="159"/>
    </location>
</feature>
<feature type="transmembrane region" description="Helical" evidence="2">
    <location>
        <begin position="170"/>
        <end position="190"/>
    </location>
</feature>
<feature type="transmembrane region" description="Helical" evidence="2">
    <location>
        <begin position="229"/>
        <end position="249"/>
    </location>
</feature>
<feature type="transmembrane region" description="Helical" evidence="2">
    <location>
        <begin position="279"/>
        <end position="299"/>
    </location>
</feature>
<feature type="domain" description="ABC transmembrane type-1" evidence="2">
    <location>
        <begin position="100"/>
        <end position="297"/>
    </location>
</feature>
<sequence>MFIIKSMLYRLMQMIVVLFVISTLTFILMKLSPGNPVDKILHLDVAQVSMEQINATKDKLGLNDSLLVQWWHWMNHLLHFNLGKSFESKEPVTQILFNYAPITLLISFSTLVLSLCISIPLGIIAAKRFHKLSDKVIRVISTLSISLPAFFIGIILLFIVTNLMNIDSVILSQFILPVITLSLGMCAYIIRLVRSNLLMLLQSNIVQASRLRGMNERYILIHDLLKPTILPIIPLLGISLGSLIGGTVVIENLFDIPGIGYLLMDSIKSRDYPVIQGCVLFIGFFVVIINTIADLLTLLLDPKQRLQLGNPKSKANTPLISESSDRHA</sequence>
<protein>
    <recommendedName>
        <fullName evidence="1">Nickel import system permease protein NikB</fullName>
    </recommendedName>
</protein>
<comment type="function">
    <text evidence="1">Part of the ABC transporter complex NikABCDE (Opp2) involved in nickel import. Probably responsible for the translocation of the substrate across the membrane.</text>
</comment>
<comment type="subunit">
    <text evidence="1">The complex is composed of two ATP-binding proteins (NikD and NikE), two transmembrane proteins (NikB and NikC) and a solute-binding protein (NikA).</text>
</comment>
<comment type="subcellular location">
    <subcellularLocation>
        <location evidence="3">Cell membrane</location>
        <topology evidence="2">Multi-pass membrane protein</topology>
    </subcellularLocation>
</comment>
<comment type="similarity">
    <text evidence="3">Belongs to the binding-protein-dependent transport system permease family. OppBC subfamily.</text>
</comment>
<accession>Q2YXY7</accession>
<dbReference type="EMBL" id="AJ938182">
    <property type="protein sequence ID" value="CAI80926.1"/>
    <property type="molecule type" value="Genomic_DNA"/>
</dbReference>
<dbReference type="RefSeq" id="WP_000469942.1">
    <property type="nucleotide sequence ID" value="NC_007622.1"/>
</dbReference>
<dbReference type="SMR" id="Q2YXY7"/>
<dbReference type="KEGG" id="sab:SAB1237c"/>
<dbReference type="HOGENOM" id="CLU_036879_0_2_9"/>
<dbReference type="GO" id="GO:0005886">
    <property type="term" value="C:plasma membrane"/>
    <property type="evidence" value="ECO:0007669"/>
    <property type="project" value="UniProtKB-SubCell"/>
</dbReference>
<dbReference type="GO" id="GO:0015099">
    <property type="term" value="F:nickel cation transmembrane transporter activity"/>
    <property type="evidence" value="ECO:0007669"/>
    <property type="project" value="InterPro"/>
</dbReference>
<dbReference type="CDD" id="cd06261">
    <property type="entry name" value="TM_PBP2"/>
    <property type="match status" value="1"/>
</dbReference>
<dbReference type="Gene3D" id="1.10.3720.10">
    <property type="entry name" value="MetI-like"/>
    <property type="match status" value="1"/>
</dbReference>
<dbReference type="InterPro" id="IPR045621">
    <property type="entry name" value="BPD_transp_1_N"/>
</dbReference>
<dbReference type="InterPro" id="IPR000515">
    <property type="entry name" value="MetI-like"/>
</dbReference>
<dbReference type="InterPro" id="IPR035906">
    <property type="entry name" value="MetI-like_sf"/>
</dbReference>
<dbReference type="InterPro" id="IPR050045">
    <property type="entry name" value="Opp2B"/>
</dbReference>
<dbReference type="NCBIfam" id="NF045470">
    <property type="entry name" value="Opp2B"/>
    <property type="match status" value="1"/>
</dbReference>
<dbReference type="PANTHER" id="PTHR43163">
    <property type="entry name" value="DIPEPTIDE TRANSPORT SYSTEM PERMEASE PROTEIN DPPB-RELATED"/>
    <property type="match status" value="1"/>
</dbReference>
<dbReference type="PANTHER" id="PTHR43163:SF6">
    <property type="entry name" value="DIPEPTIDE TRANSPORT SYSTEM PERMEASE PROTEIN DPPB-RELATED"/>
    <property type="match status" value="1"/>
</dbReference>
<dbReference type="Pfam" id="PF00528">
    <property type="entry name" value="BPD_transp_1"/>
    <property type="match status" value="1"/>
</dbReference>
<dbReference type="Pfam" id="PF19300">
    <property type="entry name" value="BPD_transp_1_N"/>
    <property type="match status" value="1"/>
</dbReference>
<dbReference type="SUPFAM" id="SSF161098">
    <property type="entry name" value="MetI-like"/>
    <property type="match status" value="1"/>
</dbReference>
<dbReference type="PROSITE" id="PS50928">
    <property type="entry name" value="ABC_TM1"/>
    <property type="match status" value="1"/>
</dbReference>
<gene>
    <name evidence="1" type="primary">nikB</name>
    <name type="synonym">oppB2</name>
    <name type="ordered locus">SAB1237c</name>
</gene>
<reference key="1">
    <citation type="journal article" date="2007" name="PLoS ONE">
        <title>Molecular correlates of host specialization in Staphylococcus aureus.</title>
        <authorList>
            <person name="Herron-Olson L."/>
            <person name="Fitzgerald J.R."/>
            <person name="Musser J.M."/>
            <person name="Kapur V."/>
        </authorList>
    </citation>
    <scope>NUCLEOTIDE SEQUENCE [LARGE SCALE GENOMIC DNA]</scope>
    <source>
        <strain>bovine RF122 / ET3-1</strain>
    </source>
</reference>
<organism>
    <name type="scientific">Staphylococcus aureus (strain bovine RF122 / ET3-1)</name>
    <dbReference type="NCBI Taxonomy" id="273036"/>
    <lineage>
        <taxon>Bacteria</taxon>
        <taxon>Bacillati</taxon>
        <taxon>Bacillota</taxon>
        <taxon>Bacilli</taxon>
        <taxon>Bacillales</taxon>
        <taxon>Staphylococcaceae</taxon>
        <taxon>Staphylococcus</taxon>
    </lineage>
</organism>